<keyword id="KW-0007">Acetylation</keyword>
<keyword id="KW-0963">Cytoplasm</keyword>
<keyword id="KW-1017">Isopeptide bond</keyword>
<keyword id="KW-0539">Nucleus</keyword>
<keyword id="KW-0647">Proteasome</keyword>
<keyword id="KW-1185">Reference proteome</keyword>
<keyword id="KW-0832">Ubl conjugation</keyword>
<gene>
    <name type="primary">PAE2</name>
    <name type="synonym">PRCZ</name>
    <name type="ordered locus">At3g14290</name>
    <name type="ORF">MLN21.8</name>
</gene>
<name>PSA5B_ARATH</name>
<sequence>MFLTRTEYDRGVNTFSPEGRLFQVEYAIEAIKLGSTAIGVKTKEGVVLAVEKRITSPLLEPSSVEKIMEIDDHIGCAMSGLIADARTLVEHARVETQNHRFSYGEPMTVESTTQALCDLALRFGEGEEESMSRPFGVSLLIAGHDENGPSLYYTDPSGTFWQCNAKAIGSGSEGADSSLQEQFNKDITLQEAETIAVSILKQVMEEKVTPNNVDIAKVAPAYHLYTPQEVEAVISRL</sequence>
<protein>
    <recommendedName>
        <fullName>Proteasome subunit alpha type-5-B</fullName>
    </recommendedName>
    <alternativeName>
        <fullName>20S proteasome alpha subunit E-2</fullName>
    </alternativeName>
    <alternativeName>
        <fullName>Proteasome component Z</fullName>
    </alternativeName>
</protein>
<feature type="chain" id="PRO_0000124125" description="Proteasome subunit alpha type-5-B">
    <location>
        <begin position="1"/>
        <end position="237"/>
    </location>
</feature>
<feature type="modified residue" description="N-acetylmethionine" evidence="6">
    <location>
        <position position="1"/>
    </location>
</feature>
<feature type="cross-link" description="Glycyl lysine isopeptide (Lys-Gly) (interchain with G-Cter in ubiquitin)" evidence="2">
    <location>
        <position position="43"/>
    </location>
</feature>
<feature type="cross-link" description="Glycyl lysine isopeptide (Lys-Gly) (interchain with G-Cter in ubiquitin)" evidence="6">
    <location>
        <position position="66"/>
    </location>
</feature>
<feature type="cross-link" description="Glycyl lysine isopeptide (Lys-Gly) (interchain with G-Cter in ubiquitin)" evidence="6">
    <location>
        <position position="185"/>
    </location>
</feature>
<proteinExistence type="evidence at protein level"/>
<comment type="function">
    <text>The proteasome is a multicatalytic proteinase complex which is characterized by its ability to cleave peptides with Arg, Phe, Tyr, Leu, and Glu adjacent to the leaving group at neutral or slightly basic pH. The proteasome has an ATP-dependent proteolytic activity.</text>
</comment>
<comment type="subunit">
    <text evidence="4 5 6">Component of the 20S core complex of the 26S proteasome. The 26S proteasome is composed of a core protease (CP), known as the 20S proteasome, capped at one or both ends by the 19S regulatory particle (RP/PA700). The 20S proteasome core is composed of 28 subunits that are arranged in four stacked rings, resulting in a barrel-shaped structure. The two end rings are each formed by seven alpha subunits, and the two central rings are each formed by seven beta subunits. The catalytic chamber with the active sites is on the inside of the barrel.</text>
</comment>
<comment type="subcellular location">
    <subcellularLocation>
        <location evidence="1">Cytoplasm</location>
    </subcellularLocation>
    <subcellularLocation>
        <location evidence="1">Nucleus</location>
    </subcellularLocation>
</comment>
<comment type="similarity">
    <text evidence="3">Belongs to the peptidase T1A family.</text>
</comment>
<dbReference type="EMBL" id="AF043525">
    <property type="protein sequence ID" value="AAC32061.1"/>
    <property type="molecule type" value="mRNA"/>
</dbReference>
<dbReference type="EMBL" id="AB022220">
    <property type="protein sequence ID" value="BAB01035.1"/>
    <property type="molecule type" value="Genomic_DNA"/>
</dbReference>
<dbReference type="EMBL" id="CP002686">
    <property type="protein sequence ID" value="AEE75498.1"/>
    <property type="molecule type" value="Genomic_DNA"/>
</dbReference>
<dbReference type="EMBL" id="AF370245">
    <property type="protein sequence ID" value="AAK44060.1"/>
    <property type="molecule type" value="mRNA"/>
</dbReference>
<dbReference type="EMBL" id="AY062970">
    <property type="protein sequence ID" value="AAL33816.1"/>
    <property type="molecule type" value="mRNA"/>
</dbReference>
<dbReference type="EMBL" id="Z26556">
    <property type="protein sequence ID" value="CAA81327.1"/>
    <property type="molecule type" value="mRNA"/>
</dbReference>
<dbReference type="PIR" id="T51973">
    <property type="entry name" value="T51973"/>
</dbReference>
<dbReference type="RefSeq" id="NP_188046.1">
    <property type="nucleotide sequence ID" value="NM_112287.4"/>
</dbReference>
<dbReference type="SMR" id="Q42134"/>
<dbReference type="BioGRID" id="5983">
    <property type="interactions" value="78"/>
</dbReference>
<dbReference type="FunCoup" id="Q42134">
    <property type="interactions" value="4434"/>
</dbReference>
<dbReference type="IntAct" id="Q42134">
    <property type="interactions" value="1"/>
</dbReference>
<dbReference type="STRING" id="3702.Q42134"/>
<dbReference type="MEROPS" id="T01.995"/>
<dbReference type="iPTMnet" id="Q42134"/>
<dbReference type="PaxDb" id="3702-AT3G14290.1"/>
<dbReference type="ProteomicsDB" id="226344"/>
<dbReference type="EnsemblPlants" id="AT3G14290.1">
    <property type="protein sequence ID" value="AT3G14290.1"/>
    <property type="gene ID" value="AT3G14290"/>
</dbReference>
<dbReference type="GeneID" id="820649"/>
<dbReference type="Gramene" id="AT3G14290.1">
    <property type="protein sequence ID" value="AT3G14290.1"/>
    <property type="gene ID" value="AT3G14290"/>
</dbReference>
<dbReference type="KEGG" id="ath:AT3G14290"/>
<dbReference type="Araport" id="AT3G14290"/>
<dbReference type="TAIR" id="AT3G14290">
    <property type="gene designation" value="PAE2"/>
</dbReference>
<dbReference type="eggNOG" id="KOG0176">
    <property type="taxonomic scope" value="Eukaryota"/>
</dbReference>
<dbReference type="HOGENOM" id="CLU_035750_4_2_1"/>
<dbReference type="InParanoid" id="Q42134"/>
<dbReference type="OMA" id="RSMIDHA"/>
<dbReference type="OrthoDB" id="1036665at2759"/>
<dbReference type="PhylomeDB" id="Q42134"/>
<dbReference type="CD-CODE" id="4299E36E">
    <property type="entry name" value="Nucleolus"/>
</dbReference>
<dbReference type="PRO" id="PR:Q42134"/>
<dbReference type="Proteomes" id="UP000006548">
    <property type="component" value="Chromosome 3"/>
</dbReference>
<dbReference type="ExpressionAtlas" id="Q42134">
    <property type="expression patterns" value="baseline and differential"/>
</dbReference>
<dbReference type="GO" id="GO:0005829">
    <property type="term" value="C:cytosol"/>
    <property type="evidence" value="ECO:0007005"/>
    <property type="project" value="TAIR"/>
</dbReference>
<dbReference type="GO" id="GO:0022626">
    <property type="term" value="C:cytosolic ribosome"/>
    <property type="evidence" value="ECO:0007005"/>
    <property type="project" value="TAIR"/>
</dbReference>
<dbReference type="GO" id="GO:0005634">
    <property type="term" value="C:nucleus"/>
    <property type="evidence" value="ECO:0007669"/>
    <property type="project" value="UniProtKB-SubCell"/>
</dbReference>
<dbReference type="GO" id="GO:0000502">
    <property type="term" value="C:proteasome complex"/>
    <property type="evidence" value="ECO:0000314"/>
    <property type="project" value="TAIR"/>
</dbReference>
<dbReference type="GO" id="GO:0019773">
    <property type="term" value="C:proteasome core complex, alpha-subunit complex"/>
    <property type="evidence" value="ECO:0000250"/>
    <property type="project" value="UniProtKB"/>
</dbReference>
<dbReference type="GO" id="GO:0004540">
    <property type="term" value="F:RNA nuclease activity"/>
    <property type="evidence" value="ECO:0000314"/>
    <property type="project" value="TAIR"/>
</dbReference>
<dbReference type="GO" id="GO:0003735">
    <property type="term" value="F:structural constituent of ribosome"/>
    <property type="evidence" value="ECO:0000314"/>
    <property type="project" value="CAFA"/>
</dbReference>
<dbReference type="GO" id="GO:0043161">
    <property type="term" value="P:proteasome-mediated ubiquitin-dependent protein catabolic process"/>
    <property type="evidence" value="ECO:0007669"/>
    <property type="project" value="InterPro"/>
</dbReference>
<dbReference type="CDD" id="cd03753">
    <property type="entry name" value="proteasome_alpha_type_5"/>
    <property type="match status" value="1"/>
</dbReference>
<dbReference type="FunFam" id="3.60.20.10:FF:000029">
    <property type="entry name" value="Proteasome subunit alpha type"/>
    <property type="match status" value="1"/>
</dbReference>
<dbReference type="Gene3D" id="3.60.20.10">
    <property type="entry name" value="Glutamine Phosphoribosylpyrophosphate, subunit 1, domain 1"/>
    <property type="match status" value="1"/>
</dbReference>
<dbReference type="InterPro" id="IPR029055">
    <property type="entry name" value="Ntn_hydrolases_N"/>
</dbReference>
<dbReference type="InterPro" id="IPR050115">
    <property type="entry name" value="Proteasome_alpha"/>
</dbReference>
<dbReference type="InterPro" id="IPR023332">
    <property type="entry name" value="Proteasome_alpha-type"/>
</dbReference>
<dbReference type="InterPro" id="IPR033812">
    <property type="entry name" value="Proteasome_alpha_type_5"/>
</dbReference>
<dbReference type="InterPro" id="IPR000426">
    <property type="entry name" value="Proteasome_asu_N"/>
</dbReference>
<dbReference type="InterPro" id="IPR001353">
    <property type="entry name" value="Proteasome_sua/b"/>
</dbReference>
<dbReference type="NCBIfam" id="NF003075">
    <property type="entry name" value="PRK03996.1"/>
    <property type="match status" value="1"/>
</dbReference>
<dbReference type="PANTHER" id="PTHR11599">
    <property type="entry name" value="PROTEASOME SUBUNIT ALPHA/BETA"/>
    <property type="match status" value="1"/>
</dbReference>
<dbReference type="Pfam" id="PF00227">
    <property type="entry name" value="Proteasome"/>
    <property type="match status" value="1"/>
</dbReference>
<dbReference type="Pfam" id="PF10584">
    <property type="entry name" value="Proteasome_A_N"/>
    <property type="match status" value="1"/>
</dbReference>
<dbReference type="SMART" id="SM00948">
    <property type="entry name" value="Proteasome_A_N"/>
    <property type="match status" value="1"/>
</dbReference>
<dbReference type="SUPFAM" id="SSF56235">
    <property type="entry name" value="N-terminal nucleophile aminohydrolases (Ntn hydrolases)"/>
    <property type="match status" value="1"/>
</dbReference>
<dbReference type="PROSITE" id="PS00388">
    <property type="entry name" value="PROTEASOME_ALPHA_1"/>
    <property type="match status" value="1"/>
</dbReference>
<dbReference type="PROSITE" id="PS51475">
    <property type="entry name" value="PROTEASOME_ALPHA_2"/>
    <property type="match status" value="1"/>
</dbReference>
<reference key="1">
    <citation type="journal article" date="1998" name="Genetics">
        <title>Molecular organization of the 20S proteasome gene family from Arabidopsis thaliana.</title>
        <authorList>
            <person name="Fu H."/>
            <person name="Doelling J.H."/>
            <person name="Arendt C.S."/>
            <person name="Hochstrasser M."/>
            <person name="Vierstra R.D."/>
        </authorList>
    </citation>
    <scope>NUCLEOTIDE SEQUENCE [MRNA]</scope>
    <scope>GENE FAMILY</scope>
    <scope>NOMENCLATURE</scope>
    <source>
        <strain>cv. Columbia</strain>
    </source>
</reference>
<reference key="2">
    <citation type="journal article" date="2000" name="DNA Res.">
        <title>Structural analysis of Arabidopsis thaliana chromosome 3. I. Sequence features of the regions of 4,504,864 bp covered by sixty P1 and TAC clones.</title>
        <authorList>
            <person name="Sato S."/>
            <person name="Nakamura Y."/>
            <person name="Kaneko T."/>
            <person name="Katoh T."/>
            <person name="Asamizu E."/>
            <person name="Tabata S."/>
        </authorList>
    </citation>
    <scope>NUCLEOTIDE SEQUENCE [LARGE SCALE GENOMIC DNA]</scope>
    <source>
        <strain>cv. Columbia</strain>
    </source>
</reference>
<reference key="3">
    <citation type="journal article" date="2017" name="Plant J.">
        <title>Araport11: a complete reannotation of the Arabidopsis thaliana reference genome.</title>
        <authorList>
            <person name="Cheng C.Y."/>
            <person name="Krishnakumar V."/>
            <person name="Chan A.P."/>
            <person name="Thibaud-Nissen F."/>
            <person name="Schobel S."/>
            <person name="Town C.D."/>
        </authorList>
    </citation>
    <scope>GENOME REANNOTATION</scope>
    <source>
        <strain>cv. Columbia</strain>
    </source>
</reference>
<reference key="4">
    <citation type="journal article" date="2003" name="Science">
        <title>Empirical analysis of transcriptional activity in the Arabidopsis genome.</title>
        <authorList>
            <person name="Yamada K."/>
            <person name="Lim J."/>
            <person name="Dale J.M."/>
            <person name="Chen H."/>
            <person name="Shinn P."/>
            <person name="Palm C.J."/>
            <person name="Southwick A.M."/>
            <person name="Wu H.C."/>
            <person name="Kim C.J."/>
            <person name="Nguyen M."/>
            <person name="Pham P.K."/>
            <person name="Cheuk R.F."/>
            <person name="Karlin-Newmann G."/>
            <person name="Liu S.X."/>
            <person name="Lam B."/>
            <person name="Sakano H."/>
            <person name="Wu T."/>
            <person name="Yu G."/>
            <person name="Miranda M."/>
            <person name="Quach H.L."/>
            <person name="Tripp M."/>
            <person name="Chang C.H."/>
            <person name="Lee J.M."/>
            <person name="Toriumi M.J."/>
            <person name="Chan M.M."/>
            <person name="Tang C.C."/>
            <person name="Onodera C.S."/>
            <person name="Deng J.M."/>
            <person name="Akiyama K."/>
            <person name="Ansari Y."/>
            <person name="Arakawa T."/>
            <person name="Banh J."/>
            <person name="Banno F."/>
            <person name="Bowser L."/>
            <person name="Brooks S.Y."/>
            <person name="Carninci P."/>
            <person name="Chao Q."/>
            <person name="Choy N."/>
            <person name="Enju A."/>
            <person name="Goldsmith A.D."/>
            <person name="Gurjal M."/>
            <person name="Hansen N.F."/>
            <person name="Hayashizaki Y."/>
            <person name="Johnson-Hopson C."/>
            <person name="Hsuan V.W."/>
            <person name="Iida K."/>
            <person name="Karnes M."/>
            <person name="Khan S."/>
            <person name="Koesema E."/>
            <person name="Ishida J."/>
            <person name="Jiang P.X."/>
            <person name="Jones T."/>
            <person name="Kawai J."/>
            <person name="Kamiya A."/>
            <person name="Meyers C."/>
            <person name="Nakajima M."/>
            <person name="Narusaka M."/>
            <person name="Seki M."/>
            <person name="Sakurai T."/>
            <person name="Satou M."/>
            <person name="Tamse R."/>
            <person name="Vaysberg M."/>
            <person name="Wallender E.K."/>
            <person name="Wong C."/>
            <person name="Yamamura Y."/>
            <person name="Yuan S."/>
            <person name="Shinozaki K."/>
            <person name="Davis R.W."/>
            <person name="Theologis A."/>
            <person name="Ecker J.R."/>
        </authorList>
    </citation>
    <scope>NUCLEOTIDE SEQUENCE [LARGE SCALE MRNA]</scope>
    <source>
        <strain>cv. Columbia</strain>
    </source>
</reference>
<reference key="5">
    <citation type="journal article" date="1996" name="Plant J.">
        <title>Further progress towards a catalogue of all Arabidopsis genes: analysis of a set of 5000 non-redundant ESTs.</title>
        <authorList>
            <person name="Cooke R."/>
            <person name="Raynal M."/>
            <person name="Laudie M."/>
            <person name="Grellet F."/>
            <person name="Delseny M."/>
            <person name="Morris P.-C."/>
            <person name="Guerrier D."/>
            <person name="Giraudat J."/>
            <person name="Quigley F."/>
            <person name="Clabault G."/>
            <person name="Li Y.-F."/>
            <person name="Mache R."/>
            <person name="Krivitzky M."/>
            <person name="Gy I.J.-J."/>
            <person name="Kreis M."/>
            <person name="Lecharny A."/>
            <person name="Parmentier Y."/>
            <person name="Marbach J."/>
            <person name="Fleck J."/>
            <person name="Clement B."/>
            <person name="Philipps G."/>
            <person name="Herve C."/>
            <person name="Bardet C."/>
            <person name="Tremousaygue D."/>
            <person name="Lescure B."/>
            <person name="Lacomme C."/>
            <person name="Roby D."/>
            <person name="Jourjon M.-F."/>
            <person name="Chabrier P."/>
            <person name="Charpenteau J.-L."/>
            <person name="Desprez T."/>
            <person name="Amselem J."/>
            <person name="Chiapello H."/>
            <person name="Hoefte H."/>
        </authorList>
    </citation>
    <scope>NUCLEOTIDE SEQUENCE [LARGE SCALE MRNA] OF 181-237</scope>
    <source>
        <strain>cv. Columbia</strain>
        <tissue>Seedling</tissue>
    </source>
</reference>
<reference key="6">
    <citation type="journal article" date="1997" name="FEBS Lett.">
        <title>The 20S proteasome gene family in Arabidopsis thaliana.</title>
        <authorList>
            <person name="Parmentier Y."/>
            <person name="Bouchez D."/>
            <person name="Fleck J."/>
            <person name="Genschik P."/>
        </authorList>
    </citation>
    <scope>GENE FAMILY</scope>
    <scope>NOMENCLATURE</scope>
</reference>
<reference key="7">
    <citation type="journal article" date="1999" name="Mol. Biol. Rep.">
        <title>Structure and functional analyses of the 26S proteasome subunits from plants.</title>
        <authorList>
            <person name="Fu H."/>
            <person name="Girod P.-A."/>
            <person name="Doelling J.H."/>
            <person name="van Nocker S."/>
            <person name="Hochstrasser M."/>
            <person name="Finley D."/>
            <person name="Vierstra R.D."/>
        </authorList>
    </citation>
    <scope>SUBUNIT</scope>
</reference>
<reference key="8">
    <citation type="journal article" date="2004" name="J. Biol. Chem.">
        <title>Purification of the Arabidopsis 26 S proteasome: biochemical and molecular analyses revealed the presence of multiple isoforms.</title>
        <authorList>
            <person name="Yang P."/>
            <person name="Fu H."/>
            <person name="Walker J."/>
            <person name="Papa C.M."/>
            <person name="Smalle J."/>
            <person name="Ju Y.-M."/>
            <person name="Vierstra R.D."/>
        </authorList>
    </citation>
    <scope>SUBUNIT</scope>
    <scope>IDENTIFICATION BY MASS SPECTROMETRY</scope>
</reference>
<reference key="9">
    <citation type="journal article" date="2010" name="J. Biol. Chem.">
        <title>Affinity purification of the Arabidopsis 26 S proteasome reveals a diverse array of plant proteolytic complexes.</title>
        <authorList>
            <person name="Book A.J."/>
            <person name="Gladman N.P."/>
            <person name="Lee S.S."/>
            <person name="Scalf M."/>
            <person name="Smith L.M."/>
            <person name="Vierstra R.D."/>
        </authorList>
    </citation>
    <scope>IDENTIFICATION BY MASS SPECTROMETRY</scope>
    <scope>CHARACTERIZATION OF THE 26S PROTEASOME COMPLEX</scope>
    <scope>SUBUNIT</scope>
    <scope>ACETYLATION AT MET-1</scope>
    <scope>UBIQUITINATION AT LYS-66 AND LYS-185</scope>
</reference>
<organism>
    <name type="scientific">Arabidopsis thaliana</name>
    <name type="common">Mouse-ear cress</name>
    <dbReference type="NCBI Taxonomy" id="3702"/>
    <lineage>
        <taxon>Eukaryota</taxon>
        <taxon>Viridiplantae</taxon>
        <taxon>Streptophyta</taxon>
        <taxon>Embryophyta</taxon>
        <taxon>Tracheophyta</taxon>
        <taxon>Spermatophyta</taxon>
        <taxon>Magnoliopsida</taxon>
        <taxon>eudicotyledons</taxon>
        <taxon>Gunneridae</taxon>
        <taxon>Pentapetalae</taxon>
        <taxon>rosids</taxon>
        <taxon>malvids</taxon>
        <taxon>Brassicales</taxon>
        <taxon>Brassicaceae</taxon>
        <taxon>Camelineae</taxon>
        <taxon>Arabidopsis</taxon>
    </lineage>
</organism>
<accession>Q42134</accession>
<evidence type="ECO:0000250" key="1"/>
<evidence type="ECO:0000250" key="2">
    <source>
        <dbReference type="UniProtKB" id="O81148"/>
    </source>
</evidence>
<evidence type="ECO:0000255" key="3">
    <source>
        <dbReference type="PROSITE-ProRule" id="PRU00808"/>
    </source>
</evidence>
<evidence type="ECO:0000269" key="4">
    <source>
    </source>
</evidence>
<evidence type="ECO:0000269" key="5">
    <source>
    </source>
</evidence>
<evidence type="ECO:0000269" key="6">
    <source>
    </source>
</evidence>